<proteinExistence type="inferred from homology"/>
<comment type="function">
    <text evidence="1">Catalyzes the transfer of acetyl from acetyl-CoA to desacetylmycothiol (Cys-GlcN-Ins) to form mycothiol.</text>
</comment>
<comment type="catalytic activity">
    <reaction evidence="1">
        <text>1D-myo-inositol 2-(L-cysteinylamino)-2-deoxy-alpha-D-glucopyranoside + acetyl-CoA = mycothiol + CoA + H(+)</text>
        <dbReference type="Rhea" id="RHEA:26172"/>
        <dbReference type="ChEBI" id="CHEBI:15378"/>
        <dbReference type="ChEBI" id="CHEBI:16768"/>
        <dbReference type="ChEBI" id="CHEBI:57287"/>
        <dbReference type="ChEBI" id="CHEBI:57288"/>
        <dbReference type="ChEBI" id="CHEBI:58887"/>
        <dbReference type="EC" id="2.3.1.189"/>
    </reaction>
</comment>
<comment type="subunit">
    <text evidence="1">Monomer.</text>
</comment>
<comment type="similarity">
    <text evidence="1">Belongs to the acetyltransferase family. MshD subfamily.</text>
</comment>
<protein>
    <recommendedName>
        <fullName evidence="1">Mycothiol acetyltransferase</fullName>
        <shortName evidence="1">MSH acetyltransferase</shortName>
        <ecNumber evidence="1">2.3.1.189</ecNumber>
    </recommendedName>
    <alternativeName>
        <fullName evidence="1">Mycothiol synthase</fullName>
    </alternativeName>
</protein>
<name>MSHD_CORA7</name>
<sequence length="304" mass="33540">MNIETNTVPQNLDLAQRVEELAAAAETHDGVAPLSEQFLIGLRDDRLGHRHLLAIEGDEVLGVAALDGQTVELFVGVDNRGRGIGKALVDALPASPQIWAHGNLPAAQALAKRNEMDVVRRLLVMAIEGRDLRAAEEAPTTVDGLEIQTYTESVERFGREHVEAEWVRTNNEAFSWHPEQGGWDLERLHRGMEAEWFDPADVLFLWDSHGGAHSAPTMAGFHWLKWHAEDTPAFGEVYVVGLAEDYRGRGLGGPLLTAGLQRMVEKGADKVILYVEADNDPAVKAYERLGFSIAEEHCVWAKSD</sequence>
<organism>
    <name type="scientific">Corynebacterium aurimucosum (strain ATCC 700975 / DSM 44827 / CIP 107346 / CN-1)</name>
    <name type="common">Corynebacterium nigricans</name>
    <dbReference type="NCBI Taxonomy" id="548476"/>
    <lineage>
        <taxon>Bacteria</taxon>
        <taxon>Bacillati</taxon>
        <taxon>Actinomycetota</taxon>
        <taxon>Actinomycetes</taxon>
        <taxon>Mycobacteriales</taxon>
        <taxon>Corynebacteriaceae</taxon>
        <taxon>Corynebacterium</taxon>
    </lineage>
</organism>
<reference key="1">
    <citation type="journal article" date="2010" name="BMC Genomics">
        <title>Complete genome sequence and lifestyle of black-pigmented Corynebacterium aurimucosum ATCC 700975 (formerly C. nigricans CN-1) isolated from a vaginal swab of a woman with spontaneous abortion.</title>
        <authorList>
            <person name="Trost E."/>
            <person name="Gotker S."/>
            <person name="Schneider J."/>
            <person name="Schneiker-Bekel S."/>
            <person name="Szczepanowski R."/>
            <person name="Tilker A."/>
            <person name="Viehoever P."/>
            <person name="Arnold W."/>
            <person name="Bekel T."/>
            <person name="Blom J."/>
            <person name="Gartemann K.H."/>
            <person name="Linke B."/>
            <person name="Goesmann A."/>
            <person name="Puhler A."/>
            <person name="Shukla S.K."/>
            <person name="Tauch A."/>
        </authorList>
    </citation>
    <scope>NUCLEOTIDE SEQUENCE [LARGE SCALE GENOMIC DNA]</scope>
    <source>
        <strain>ATCC 700975 / DSM 44827 / CIP 107346 / CN-1</strain>
    </source>
</reference>
<dbReference type="EC" id="2.3.1.189" evidence="1"/>
<dbReference type="EMBL" id="CP001601">
    <property type="protein sequence ID" value="ACP33748.1"/>
    <property type="molecule type" value="Genomic_DNA"/>
</dbReference>
<dbReference type="RefSeq" id="WP_010189012.1">
    <property type="nucleotide sequence ID" value="NC_012590.1"/>
</dbReference>
<dbReference type="SMR" id="C3PIU4"/>
<dbReference type="STRING" id="548476.cauri_2155"/>
<dbReference type="GeneID" id="31924809"/>
<dbReference type="KEGG" id="car:cauri_2155"/>
<dbReference type="eggNOG" id="COG0456">
    <property type="taxonomic scope" value="Bacteria"/>
</dbReference>
<dbReference type="HOGENOM" id="CLU_068014_0_0_11"/>
<dbReference type="OrthoDB" id="3208058at2"/>
<dbReference type="Proteomes" id="UP000002077">
    <property type="component" value="Chromosome"/>
</dbReference>
<dbReference type="GO" id="GO:0035447">
    <property type="term" value="F:mycothiol synthase activity"/>
    <property type="evidence" value="ECO:0007669"/>
    <property type="project" value="UniProtKB-UniRule"/>
</dbReference>
<dbReference type="GO" id="GO:0010125">
    <property type="term" value="P:mycothiol biosynthetic process"/>
    <property type="evidence" value="ECO:0007669"/>
    <property type="project" value="UniProtKB-UniRule"/>
</dbReference>
<dbReference type="CDD" id="cd04301">
    <property type="entry name" value="NAT_SF"/>
    <property type="match status" value="1"/>
</dbReference>
<dbReference type="Gene3D" id="3.40.630.30">
    <property type="match status" value="1"/>
</dbReference>
<dbReference type="HAMAP" id="MF_01698">
    <property type="entry name" value="MshD"/>
    <property type="match status" value="1"/>
</dbReference>
<dbReference type="InterPro" id="IPR016181">
    <property type="entry name" value="Acyl_CoA_acyltransferase"/>
</dbReference>
<dbReference type="InterPro" id="IPR000182">
    <property type="entry name" value="GNAT_dom"/>
</dbReference>
<dbReference type="InterPro" id="IPR017813">
    <property type="entry name" value="Mycothiol_AcTrfase"/>
</dbReference>
<dbReference type="NCBIfam" id="TIGR03448">
    <property type="entry name" value="mycothiol_MshD"/>
    <property type="match status" value="1"/>
</dbReference>
<dbReference type="PANTHER" id="PTHR43072:SF60">
    <property type="entry name" value="L-2,4-DIAMINOBUTYRIC ACID ACETYLTRANSFERASE"/>
    <property type="match status" value="1"/>
</dbReference>
<dbReference type="PANTHER" id="PTHR43072">
    <property type="entry name" value="N-ACETYLTRANSFERASE"/>
    <property type="match status" value="1"/>
</dbReference>
<dbReference type="Pfam" id="PF00583">
    <property type="entry name" value="Acetyltransf_1"/>
    <property type="match status" value="1"/>
</dbReference>
<dbReference type="PIRSF" id="PIRSF021524">
    <property type="entry name" value="MSH_acetyltransferase"/>
    <property type="match status" value="1"/>
</dbReference>
<dbReference type="SUPFAM" id="SSF55729">
    <property type="entry name" value="Acyl-CoA N-acyltransferases (Nat)"/>
    <property type="match status" value="2"/>
</dbReference>
<dbReference type="PROSITE" id="PS51186">
    <property type="entry name" value="GNAT"/>
    <property type="match status" value="1"/>
</dbReference>
<keyword id="KW-0012">Acyltransferase</keyword>
<keyword id="KW-1185">Reference proteome</keyword>
<keyword id="KW-0677">Repeat</keyword>
<keyword id="KW-0808">Transferase</keyword>
<accession>C3PIU4</accession>
<evidence type="ECO:0000255" key="1">
    <source>
        <dbReference type="HAMAP-Rule" id="MF_01698"/>
    </source>
</evidence>
<gene>
    <name evidence="1" type="primary">mshD</name>
    <name type="ordered locus">cauri_2155</name>
</gene>
<feature type="chain" id="PRO_0000400247" description="Mycothiol acetyltransferase">
    <location>
        <begin position="1"/>
        <end position="304"/>
    </location>
</feature>
<feature type="domain" description="N-acetyltransferase" evidence="1">
    <location>
        <begin position="145"/>
        <end position="304"/>
    </location>
</feature>
<feature type="binding site" evidence="1">
    <location>
        <position position="36"/>
    </location>
    <ligand>
        <name>1D-myo-inositol 2-(L-cysteinylamino)-2-deoxy-alpha-D-glucopyranoside</name>
        <dbReference type="ChEBI" id="CHEBI:58887"/>
    </ligand>
</feature>
<feature type="binding site" evidence="1">
    <location>
        <begin position="73"/>
        <end position="75"/>
    </location>
    <ligand>
        <name>acetyl-CoA</name>
        <dbReference type="ChEBI" id="CHEBI:57288"/>
        <label>1</label>
    </ligand>
</feature>
<feature type="binding site" evidence="1">
    <location>
        <position position="179"/>
    </location>
    <ligand>
        <name>1D-myo-inositol 2-(L-cysteinylamino)-2-deoxy-alpha-D-glucopyranoside</name>
        <dbReference type="ChEBI" id="CHEBI:58887"/>
    </ligand>
</feature>
<feature type="binding site" evidence="1">
    <location>
        <position position="225"/>
    </location>
    <ligand>
        <name>1D-myo-inositol 2-(L-cysteinylamino)-2-deoxy-alpha-D-glucopyranoside</name>
        <dbReference type="ChEBI" id="CHEBI:58887"/>
    </ligand>
</feature>
<feature type="binding site" evidence="1">
    <location>
        <position position="236"/>
    </location>
    <ligand>
        <name>1D-myo-inositol 2-(L-cysteinylamino)-2-deoxy-alpha-D-glucopyranoside</name>
        <dbReference type="ChEBI" id="CHEBI:58887"/>
    </ligand>
</feature>
<feature type="binding site" evidence="1">
    <location>
        <begin position="240"/>
        <end position="242"/>
    </location>
    <ligand>
        <name>acetyl-CoA</name>
        <dbReference type="ChEBI" id="CHEBI:57288"/>
        <label>2</label>
    </ligand>
</feature>
<feature type="binding site" evidence="1">
    <location>
        <position position="274"/>
    </location>
    <ligand>
        <name>1D-myo-inositol 2-(L-cysteinylamino)-2-deoxy-alpha-D-glucopyranoside</name>
        <dbReference type="ChEBI" id="CHEBI:58887"/>
    </ligand>
</feature>
<feature type="binding site" evidence="1">
    <location>
        <begin position="279"/>
        <end position="284"/>
    </location>
    <ligand>
        <name>acetyl-CoA</name>
        <dbReference type="ChEBI" id="CHEBI:57288"/>
        <label>2</label>
    </ligand>
</feature>